<reference key="1">
    <citation type="journal article" date="2002" name="Proc. Natl. Acad. Sci. U.S.A.">
        <title>The genome sequence of the facultative intracellular pathogen Brucella melitensis.</title>
        <authorList>
            <person name="DelVecchio V.G."/>
            <person name="Kapatral V."/>
            <person name="Redkar R.J."/>
            <person name="Patra G."/>
            <person name="Mujer C."/>
            <person name="Los T."/>
            <person name="Ivanova N."/>
            <person name="Anderson I."/>
            <person name="Bhattacharyya A."/>
            <person name="Lykidis A."/>
            <person name="Reznik G."/>
            <person name="Jablonski L."/>
            <person name="Larsen N."/>
            <person name="D'Souza M."/>
            <person name="Bernal A."/>
            <person name="Mazur M."/>
            <person name="Goltsman E."/>
            <person name="Selkov E."/>
            <person name="Elzer P.H."/>
            <person name="Hagius S."/>
            <person name="O'Callaghan D."/>
            <person name="Letesson J.-J."/>
            <person name="Haselkorn R."/>
            <person name="Kyrpides N.C."/>
            <person name="Overbeek R."/>
        </authorList>
    </citation>
    <scope>NUCLEOTIDE SEQUENCE [LARGE SCALE GENOMIC DNA]</scope>
    <source>
        <strain>ATCC 23456 / CCUG 17765 / NCTC 10094 / 16M</strain>
    </source>
</reference>
<sequence length="168" mass="18401">MAGSVNKVILVGNLGADPEIRRLNSGDMVANLRIATSESWRDRQTGERKDRTEWHSVVIFNENLAKVAEQYLKKGAKVYIEGALQTRKWQDQNGNDRYSTEIVLQKFRGELQMLDSRSEGSEGRSFGGGGNRNQMSDYSGGGGDFGSSGPSSGSSGGFSRDLDDEIPF</sequence>
<feature type="chain" id="PRO_0000096015" description="Single-stranded DNA-binding protein">
    <location>
        <begin position="1"/>
        <end position="168"/>
    </location>
</feature>
<feature type="domain" description="SSB" evidence="1">
    <location>
        <begin position="5"/>
        <end position="111"/>
    </location>
</feature>
<feature type="DNA-binding region" evidence="1">
    <location>
        <begin position="54"/>
        <end position="60"/>
    </location>
</feature>
<feature type="region of interest" description="Disordered" evidence="2">
    <location>
        <begin position="113"/>
        <end position="168"/>
    </location>
</feature>
<feature type="short sequence motif" description="Important for interaction with partner proteins" evidence="1">
    <location>
        <begin position="163"/>
        <end position="168"/>
    </location>
</feature>
<feature type="compositionally biased region" description="Low complexity" evidence="2">
    <location>
        <begin position="147"/>
        <end position="159"/>
    </location>
</feature>
<gene>
    <name type="primary">ssb</name>
    <name type="ordered locus">BMEI0880</name>
</gene>
<comment type="function">
    <text evidence="1">Plays an important role in DNA replication, recombination and repair. Binds to ssDNA and to an array of partner proteins to recruit them to their sites of action during DNA metabolism.</text>
</comment>
<comment type="subunit">
    <text evidence="1">Homotetramer.</text>
</comment>
<protein>
    <recommendedName>
        <fullName evidence="1">Single-stranded DNA-binding protein</fullName>
        <shortName evidence="1">SSB</shortName>
    </recommendedName>
</protein>
<name>SSB_BRUME</name>
<keyword id="KW-0227">DNA damage</keyword>
<keyword id="KW-0233">DNA recombination</keyword>
<keyword id="KW-0234">DNA repair</keyword>
<keyword id="KW-0235">DNA replication</keyword>
<keyword id="KW-0238">DNA-binding</keyword>
<organism>
    <name type="scientific">Brucella melitensis biotype 1 (strain ATCC 23456 / CCUG 17765 / NCTC 10094 / 16M)</name>
    <dbReference type="NCBI Taxonomy" id="224914"/>
    <lineage>
        <taxon>Bacteria</taxon>
        <taxon>Pseudomonadati</taxon>
        <taxon>Pseudomonadota</taxon>
        <taxon>Alphaproteobacteria</taxon>
        <taxon>Hyphomicrobiales</taxon>
        <taxon>Brucellaceae</taxon>
        <taxon>Brucella/Ochrobactrum group</taxon>
        <taxon>Brucella</taxon>
    </lineage>
</organism>
<accession>Q8YHC2</accession>
<dbReference type="EMBL" id="AE008917">
    <property type="protein sequence ID" value="AAL52061.1"/>
    <property type="molecule type" value="Genomic_DNA"/>
</dbReference>
<dbReference type="PIR" id="AB3362">
    <property type="entry name" value="AB3362"/>
</dbReference>
<dbReference type="RefSeq" id="WP_004683827.1">
    <property type="nucleotide sequence ID" value="NZ_GG703780.1"/>
</dbReference>
<dbReference type="SMR" id="Q8YHC2"/>
<dbReference type="GeneID" id="29593699"/>
<dbReference type="KEGG" id="bme:BMEI0880"/>
<dbReference type="KEGG" id="bmel:DK63_541"/>
<dbReference type="PATRIC" id="fig|224914.52.peg.564"/>
<dbReference type="eggNOG" id="COG0629">
    <property type="taxonomic scope" value="Bacteria"/>
</dbReference>
<dbReference type="PhylomeDB" id="Q8YHC2"/>
<dbReference type="Proteomes" id="UP000000419">
    <property type="component" value="Chromosome I"/>
</dbReference>
<dbReference type="GO" id="GO:0009295">
    <property type="term" value="C:nucleoid"/>
    <property type="evidence" value="ECO:0007669"/>
    <property type="project" value="TreeGrafter"/>
</dbReference>
<dbReference type="GO" id="GO:0003697">
    <property type="term" value="F:single-stranded DNA binding"/>
    <property type="evidence" value="ECO:0007669"/>
    <property type="project" value="UniProtKB-UniRule"/>
</dbReference>
<dbReference type="GO" id="GO:0006310">
    <property type="term" value="P:DNA recombination"/>
    <property type="evidence" value="ECO:0007669"/>
    <property type="project" value="UniProtKB-UniRule"/>
</dbReference>
<dbReference type="GO" id="GO:0006281">
    <property type="term" value="P:DNA repair"/>
    <property type="evidence" value="ECO:0007669"/>
    <property type="project" value="UniProtKB-UniRule"/>
</dbReference>
<dbReference type="GO" id="GO:0006260">
    <property type="term" value="P:DNA replication"/>
    <property type="evidence" value="ECO:0007669"/>
    <property type="project" value="UniProtKB-UniRule"/>
</dbReference>
<dbReference type="CDD" id="cd04496">
    <property type="entry name" value="SSB_OBF"/>
    <property type="match status" value="1"/>
</dbReference>
<dbReference type="Gene3D" id="2.40.50.140">
    <property type="entry name" value="Nucleic acid-binding proteins"/>
    <property type="match status" value="1"/>
</dbReference>
<dbReference type="HAMAP" id="MF_00984">
    <property type="entry name" value="SSB"/>
    <property type="match status" value="1"/>
</dbReference>
<dbReference type="InterPro" id="IPR012340">
    <property type="entry name" value="NA-bd_OB-fold"/>
</dbReference>
<dbReference type="InterPro" id="IPR000424">
    <property type="entry name" value="Primosome_PriB/ssb"/>
</dbReference>
<dbReference type="InterPro" id="IPR011344">
    <property type="entry name" value="ssDNA-bd"/>
</dbReference>
<dbReference type="NCBIfam" id="NF004972">
    <property type="entry name" value="PRK06341.1"/>
    <property type="match status" value="1"/>
</dbReference>
<dbReference type="NCBIfam" id="TIGR00621">
    <property type="entry name" value="ssb"/>
    <property type="match status" value="1"/>
</dbReference>
<dbReference type="PANTHER" id="PTHR10302">
    <property type="entry name" value="SINGLE-STRANDED DNA-BINDING PROTEIN"/>
    <property type="match status" value="1"/>
</dbReference>
<dbReference type="PANTHER" id="PTHR10302:SF27">
    <property type="entry name" value="SINGLE-STRANDED DNA-BINDING PROTEIN"/>
    <property type="match status" value="1"/>
</dbReference>
<dbReference type="Pfam" id="PF00436">
    <property type="entry name" value="SSB"/>
    <property type="match status" value="1"/>
</dbReference>
<dbReference type="SUPFAM" id="SSF50249">
    <property type="entry name" value="Nucleic acid-binding proteins"/>
    <property type="match status" value="1"/>
</dbReference>
<dbReference type="PROSITE" id="PS50935">
    <property type="entry name" value="SSB"/>
    <property type="match status" value="1"/>
</dbReference>
<proteinExistence type="inferred from homology"/>
<evidence type="ECO:0000255" key="1">
    <source>
        <dbReference type="HAMAP-Rule" id="MF_00984"/>
    </source>
</evidence>
<evidence type="ECO:0000256" key="2">
    <source>
        <dbReference type="SAM" id="MobiDB-lite"/>
    </source>
</evidence>